<sequence>MNHLGDIMKNSLKVEPIENGTVIDHIKQGKALNVYNALDIKKDKTITIAMNVPSGKNHKKDILKIEGIELSKYDVDKISLISPNATINIIKNKIVINKFKVEIPNTIEGILKCTNPNCITNIENVAGKFDVEGREPLKIRCFYCEKFLNSIEVYK</sequence>
<name>PYRI_META3</name>
<reference key="1">
    <citation type="submission" date="2007-06" db="EMBL/GenBank/DDBJ databases">
        <title>Complete sequence of Methanococcus aeolicus Nankai-3.</title>
        <authorList>
            <consortium name="US DOE Joint Genome Institute"/>
            <person name="Copeland A."/>
            <person name="Lucas S."/>
            <person name="Lapidus A."/>
            <person name="Barry K."/>
            <person name="Glavina del Rio T."/>
            <person name="Dalin E."/>
            <person name="Tice H."/>
            <person name="Pitluck S."/>
            <person name="Chain P."/>
            <person name="Malfatti S."/>
            <person name="Shin M."/>
            <person name="Vergez L."/>
            <person name="Schmutz J."/>
            <person name="Larimer F."/>
            <person name="Land M."/>
            <person name="Hauser L."/>
            <person name="Kyrpides N."/>
            <person name="Lykidis A."/>
            <person name="Sieprawska-Lupa M."/>
            <person name="Whitman W.B."/>
            <person name="Richardson P."/>
        </authorList>
    </citation>
    <scope>NUCLEOTIDE SEQUENCE [LARGE SCALE GENOMIC DNA]</scope>
    <source>
        <strain>ATCC BAA-1280 / DSM 17508 / OCM 812 / Nankai-3</strain>
    </source>
</reference>
<proteinExistence type="inferred from homology"/>
<protein>
    <recommendedName>
        <fullName evidence="1">Aspartate carbamoyltransferase regulatory chain</fullName>
    </recommendedName>
</protein>
<dbReference type="EMBL" id="CP000743">
    <property type="protein sequence ID" value="ABR55634.1"/>
    <property type="molecule type" value="Genomic_DNA"/>
</dbReference>
<dbReference type="SMR" id="A6UT12"/>
<dbReference type="STRING" id="419665.Maeo_0042"/>
<dbReference type="KEGG" id="mae:Maeo_0042"/>
<dbReference type="eggNOG" id="arCOG04229">
    <property type="taxonomic scope" value="Archaea"/>
</dbReference>
<dbReference type="HOGENOM" id="CLU_128576_0_0_2"/>
<dbReference type="Proteomes" id="UP000001106">
    <property type="component" value="Chromosome"/>
</dbReference>
<dbReference type="GO" id="GO:0009347">
    <property type="term" value="C:aspartate carbamoyltransferase complex"/>
    <property type="evidence" value="ECO:0007669"/>
    <property type="project" value="InterPro"/>
</dbReference>
<dbReference type="GO" id="GO:0046872">
    <property type="term" value="F:metal ion binding"/>
    <property type="evidence" value="ECO:0007669"/>
    <property type="project" value="UniProtKB-KW"/>
</dbReference>
<dbReference type="GO" id="GO:0006207">
    <property type="term" value="P:'de novo' pyrimidine nucleobase biosynthetic process"/>
    <property type="evidence" value="ECO:0007669"/>
    <property type="project" value="InterPro"/>
</dbReference>
<dbReference type="GO" id="GO:0006221">
    <property type="term" value="P:pyrimidine nucleotide biosynthetic process"/>
    <property type="evidence" value="ECO:0007669"/>
    <property type="project" value="UniProtKB-UniRule"/>
</dbReference>
<dbReference type="Gene3D" id="2.30.30.20">
    <property type="entry name" value="Aspartate carbamoyltransferase regulatory subunit, C-terminal domain"/>
    <property type="match status" value="1"/>
</dbReference>
<dbReference type="Gene3D" id="3.30.70.140">
    <property type="entry name" value="Aspartate carbamoyltransferase regulatory subunit, N-terminal domain"/>
    <property type="match status" value="1"/>
</dbReference>
<dbReference type="HAMAP" id="MF_00002">
    <property type="entry name" value="Asp_carb_tr_reg"/>
    <property type="match status" value="1"/>
</dbReference>
<dbReference type="InterPro" id="IPR020545">
    <property type="entry name" value="Asp_carbamoyltransf_reg_N"/>
</dbReference>
<dbReference type="InterPro" id="IPR002801">
    <property type="entry name" value="Asp_carbamoylTrfase_reg"/>
</dbReference>
<dbReference type="InterPro" id="IPR020542">
    <property type="entry name" value="Asp_carbamoyltrfase_reg_C"/>
</dbReference>
<dbReference type="InterPro" id="IPR036792">
    <property type="entry name" value="Asp_carbatrfase_reg_C_sf"/>
</dbReference>
<dbReference type="InterPro" id="IPR036793">
    <property type="entry name" value="Asp_carbatrfase_reg_N_sf"/>
</dbReference>
<dbReference type="NCBIfam" id="TIGR00240">
    <property type="entry name" value="ATCase_reg"/>
    <property type="match status" value="1"/>
</dbReference>
<dbReference type="PANTHER" id="PTHR35805">
    <property type="entry name" value="ASPARTATE CARBAMOYLTRANSFERASE REGULATORY CHAIN"/>
    <property type="match status" value="1"/>
</dbReference>
<dbReference type="PANTHER" id="PTHR35805:SF1">
    <property type="entry name" value="ASPARTATE CARBAMOYLTRANSFERASE REGULATORY CHAIN"/>
    <property type="match status" value="1"/>
</dbReference>
<dbReference type="Pfam" id="PF01948">
    <property type="entry name" value="PyrI"/>
    <property type="match status" value="1"/>
</dbReference>
<dbReference type="Pfam" id="PF02748">
    <property type="entry name" value="PyrI_C"/>
    <property type="match status" value="1"/>
</dbReference>
<dbReference type="SUPFAM" id="SSF57825">
    <property type="entry name" value="Aspartate carbamoyltransferase, Regulatory-chain, C-terminal domain"/>
    <property type="match status" value="1"/>
</dbReference>
<dbReference type="SUPFAM" id="SSF54893">
    <property type="entry name" value="Aspartate carbamoyltransferase, Regulatory-chain, N-terminal domain"/>
    <property type="match status" value="1"/>
</dbReference>
<keyword id="KW-0479">Metal-binding</keyword>
<keyword id="KW-0665">Pyrimidine biosynthesis</keyword>
<keyword id="KW-0862">Zinc</keyword>
<feature type="chain" id="PRO_0000321502" description="Aspartate carbamoyltransferase regulatory chain">
    <location>
        <begin position="1"/>
        <end position="155"/>
    </location>
</feature>
<feature type="binding site" evidence="1">
    <location>
        <position position="113"/>
    </location>
    <ligand>
        <name>Zn(2+)</name>
        <dbReference type="ChEBI" id="CHEBI:29105"/>
    </ligand>
</feature>
<feature type="binding site" evidence="1">
    <location>
        <position position="118"/>
    </location>
    <ligand>
        <name>Zn(2+)</name>
        <dbReference type="ChEBI" id="CHEBI:29105"/>
    </ligand>
</feature>
<feature type="binding site" evidence="1">
    <location>
        <position position="141"/>
    </location>
    <ligand>
        <name>Zn(2+)</name>
        <dbReference type="ChEBI" id="CHEBI:29105"/>
    </ligand>
</feature>
<feature type="binding site" evidence="1">
    <location>
        <position position="144"/>
    </location>
    <ligand>
        <name>Zn(2+)</name>
        <dbReference type="ChEBI" id="CHEBI:29105"/>
    </ligand>
</feature>
<gene>
    <name evidence="1" type="primary">pyrI</name>
    <name type="ordered locus">Maeo_0042</name>
</gene>
<comment type="function">
    <text evidence="1">Involved in allosteric regulation of aspartate carbamoyltransferase.</text>
</comment>
<comment type="cofactor">
    <cofactor evidence="1">
        <name>Zn(2+)</name>
        <dbReference type="ChEBI" id="CHEBI:29105"/>
    </cofactor>
    <text evidence="1">Binds 1 zinc ion per subunit.</text>
</comment>
<comment type="subunit">
    <text evidence="1">Contains catalytic and regulatory chains.</text>
</comment>
<comment type="similarity">
    <text evidence="1">Belongs to the PyrI family.</text>
</comment>
<accession>A6UT12</accession>
<organism>
    <name type="scientific">Methanococcus aeolicus (strain ATCC BAA-1280 / DSM 17508 / OCM 812 / Nankai-3)</name>
    <dbReference type="NCBI Taxonomy" id="419665"/>
    <lineage>
        <taxon>Archaea</taxon>
        <taxon>Methanobacteriati</taxon>
        <taxon>Methanobacteriota</taxon>
        <taxon>Methanomada group</taxon>
        <taxon>Methanococci</taxon>
        <taxon>Methanococcales</taxon>
        <taxon>Methanococcaceae</taxon>
        <taxon>Methanococcus</taxon>
    </lineage>
</organism>
<evidence type="ECO:0000255" key="1">
    <source>
        <dbReference type="HAMAP-Rule" id="MF_00002"/>
    </source>
</evidence>